<evidence type="ECO:0000256" key="1">
    <source>
        <dbReference type="SAM" id="MobiDB-lite"/>
    </source>
</evidence>
<evidence type="ECO:0000269" key="2">
    <source>
    </source>
</evidence>
<evidence type="ECO:0000269" key="3">
    <source>
    </source>
</evidence>
<evidence type="ECO:0000269" key="4">
    <source>
    </source>
</evidence>
<evidence type="ECO:0000269" key="5">
    <source>
    </source>
</evidence>
<evidence type="ECO:0000305" key="6"/>
<evidence type="ECO:0000312" key="7">
    <source>
        <dbReference type="EMBL" id="EEE61503.1"/>
    </source>
</evidence>
<accession>Q7XSJ6</accession>
<accession>B9FBZ8</accession>
<accession>Q9SSZ5</accession>
<feature type="chain" id="PRO_0000287386" description="Cyclin-B2-1">
    <location>
        <begin position="1"/>
        <end position="420"/>
    </location>
</feature>
<feature type="region of interest" description="Disordered" evidence="1">
    <location>
        <begin position="1"/>
        <end position="61"/>
    </location>
</feature>
<feature type="compositionally biased region" description="Basic and acidic residues" evidence="1">
    <location>
        <begin position="49"/>
        <end position="60"/>
    </location>
</feature>
<feature type="sequence conflict" description="In Ref. 1; BAA86629." evidence="6" ref="1">
    <original>P</original>
    <variation>S</variation>
    <location>
        <position position="40"/>
    </location>
</feature>
<feature type="sequence conflict" description="In Ref. 1; BAA86629." evidence="6" ref="1">
    <original>T</original>
    <variation>L</variation>
    <location>
        <position position="71"/>
    </location>
</feature>
<feature type="sequence conflict" description="In Ref. 1; BAA86629." evidence="6" ref="1">
    <original>A</original>
    <variation>S</variation>
    <location>
        <position position="330"/>
    </location>
</feature>
<reference key="1">
    <citation type="journal article" date="1999" name="Mol. Gen. Genet.">
        <title>Molecular characterization of mitotic cyclins in rice plants.</title>
        <authorList>
            <person name="Umeda M."/>
            <person name="Iwamoto N."/>
            <person name="Umeda-Hara C."/>
            <person name="Yamaguchi M."/>
            <person name="Hashimoto J."/>
            <person name="Uchimiya H."/>
        </authorList>
    </citation>
    <scope>NUCLEOTIDE SEQUENCE [MRNA]</scope>
    <scope>FUNCTION</scope>
    <scope>TISSUE SPECIFICITY</scope>
    <scope>DEVELOPMENTAL STAGE</scope>
    <source>
        <strain>cv. Yamahoushi</strain>
    </source>
</reference>
<reference key="2">
    <citation type="journal article" date="2002" name="Nature">
        <title>Sequence and analysis of rice chromosome 4.</title>
        <authorList>
            <person name="Feng Q."/>
            <person name="Zhang Y."/>
            <person name="Hao P."/>
            <person name="Wang S."/>
            <person name="Fu G."/>
            <person name="Huang Y."/>
            <person name="Li Y."/>
            <person name="Zhu J."/>
            <person name="Liu Y."/>
            <person name="Hu X."/>
            <person name="Jia P."/>
            <person name="Zhang Y."/>
            <person name="Zhao Q."/>
            <person name="Ying K."/>
            <person name="Yu S."/>
            <person name="Tang Y."/>
            <person name="Weng Q."/>
            <person name="Zhang L."/>
            <person name="Lu Y."/>
            <person name="Mu J."/>
            <person name="Lu Y."/>
            <person name="Zhang L.S."/>
            <person name="Yu Z."/>
            <person name="Fan D."/>
            <person name="Liu X."/>
            <person name="Lu T."/>
            <person name="Li C."/>
            <person name="Wu Y."/>
            <person name="Sun T."/>
            <person name="Lei H."/>
            <person name="Li T."/>
            <person name="Hu H."/>
            <person name="Guan J."/>
            <person name="Wu M."/>
            <person name="Zhang R."/>
            <person name="Zhou B."/>
            <person name="Chen Z."/>
            <person name="Chen L."/>
            <person name="Jin Z."/>
            <person name="Wang R."/>
            <person name="Yin H."/>
            <person name="Cai Z."/>
            <person name="Ren S."/>
            <person name="Lv G."/>
            <person name="Gu W."/>
            <person name="Zhu G."/>
            <person name="Tu Y."/>
            <person name="Jia J."/>
            <person name="Zhang Y."/>
            <person name="Chen J."/>
            <person name="Kang H."/>
            <person name="Chen X."/>
            <person name="Shao C."/>
            <person name="Sun Y."/>
            <person name="Hu Q."/>
            <person name="Zhang X."/>
            <person name="Zhang W."/>
            <person name="Wang L."/>
            <person name="Ding C."/>
            <person name="Sheng H."/>
            <person name="Gu J."/>
            <person name="Chen S."/>
            <person name="Ni L."/>
            <person name="Zhu F."/>
            <person name="Chen W."/>
            <person name="Lan L."/>
            <person name="Lai Y."/>
            <person name="Cheng Z."/>
            <person name="Gu M."/>
            <person name="Jiang J."/>
            <person name="Li J."/>
            <person name="Hong G."/>
            <person name="Xue Y."/>
            <person name="Han B."/>
        </authorList>
    </citation>
    <scope>NUCLEOTIDE SEQUENCE [LARGE SCALE GENOMIC DNA]</scope>
    <source>
        <strain>cv. Nipponbare</strain>
    </source>
</reference>
<reference key="3">
    <citation type="journal article" date="2005" name="Nature">
        <title>The map-based sequence of the rice genome.</title>
        <authorList>
            <consortium name="International rice genome sequencing project (IRGSP)"/>
        </authorList>
    </citation>
    <scope>NUCLEOTIDE SEQUENCE [LARGE SCALE GENOMIC DNA]</scope>
    <source>
        <strain>cv. Nipponbare</strain>
    </source>
</reference>
<reference key="4">
    <citation type="journal article" date="2008" name="Nucleic Acids Res.">
        <title>The rice annotation project database (RAP-DB): 2008 update.</title>
        <authorList>
            <consortium name="The rice annotation project (RAP)"/>
        </authorList>
    </citation>
    <scope>GENOME REANNOTATION</scope>
    <source>
        <strain>cv. Nipponbare</strain>
    </source>
</reference>
<reference key="5">
    <citation type="journal article" date="2013" name="Rice">
        <title>Improvement of the Oryza sativa Nipponbare reference genome using next generation sequence and optical map data.</title>
        <authorList>
            <person name="Kawahara Y."/>
            <person name="de la Bastide M."/>
            <person name="Hamilton J.P."/>
            <person name="Kanamori H."/>
            <person name="McCombie W.R."/>
            <person name="Ouyang S."/>
            <person name="Schwartz D.C."/>
            <person name="Tanaka T."/>
            <person name="Wu J."/>
            <person name="Zhou S."/>
            <person name="Childs K.L."/>
            <person name="Davidson R.M."/>
            <person name="Lin H."/>
            <person name="Quesada-Ocampo L."/>
            <person name="Vaillancourt B."/>
            <person name="Sakai H."/>
            <person name="Lee S.S."/>
            <person name="Kim J."/>
            <person name="Numa H."/>
            <person name="Itoh T."/>
            <person name="Buell C.R."/>
            <person name="Matsumoto T."/>
        </authorList>
    </citation>
    <scope>GENOME REANNOTATION</scope>
    <source>
        <strain>cv. Nipponbare</strain>
    </source>
</reference>
<reference key="6">
    <citation type="journal article" date="2005" name="PLoS Biol.">
        <title>The genomes of Oryza sativa: a history of duplications.</title>
        <authorList>
            <person name="Yu J."/>
            <person name="Wang J."/>
            <person name="Lin W."/>
            <person name="Li S."/>
            <person name="Li H."/>
            <person name="Zhou J."/>
            <person name="Ni P."/>
            <person name="Dong W."/>
            <person name="Hu S."/>
            <person name="Zeng C."/>
            <person name="Zhang J."/>
            <person name="Zhang Y."/>
            <person name="Li R."/>
            <person name="Xu Z."/>
            <person name="Li S."/>
            <person name="Li X."/>
            <person name="Zheng H."/>
            <person name="Cong L."/>
            <person name="Lin L."/>
            <person name="Yin J."/>
            <person name="Geng J."/>
            <person name="Li G."/>
            <person name="Shi J."/>
            <person name="Liu J."/>
            <person name="Lv H."/>
            <person name="Li J."/>
            <person name="Wang J."/>
            <person name="Deng Y."/>
            <person name="Ran L."/>
            <person name="Shi X."/>
            <person name="Wang X."/>
            <person name="Wu Q."/>
            <person name="Li C."/>
            <person name="Ren X."/>
            <person name="Wang J."/>
            <person name="Wang X."/>
            <person name="Li D."/>
            <person name="Liu D."/>
            <person name="Zhang X."/>
            <person name="Ji Z."/>
            <person name="Zhao W."/>
            <person name="Sun Y."/>
            <person name="Zhang Z."/>
            <person name="Bao J."/>
            <person name="Han Y."/>
            <person name="Dong L."/>
            <person name="Ji J."/>
            <person name="Chen P."/>
            <person name="Wu S."/>
            <person name="Liu J."/>
            <person name="Xiao Y."/>
            <person name="Bu D."/>
            <person name="Tan J."/>
            <person name="Yang L."/>
            <person name="Ye C."/>
            <person name="Zhang J."/>
            <person name="Xu J."/>
            <person name="Zhou Y."/>
            <person name="Yu Y."/>
            <person name="Zhang B."/>
            <person name="Zhuang S."/>
            <person name="Wei H."/>
            <person name="Liu B."/>
            <person name="Lei M."/>
            <person name="Yu H."/>
            <person name="Li Y."/>
            <person name="Xu H."/>
            <person name="Wei S."/>
            <person name="He X."/>
            <person name="Fang L."/>
            <person name="Zhang Z."/>
            <person name="Zhang Y."/>
            <person name="Huang X."/>
            <person name="Su Z."/>
            <person name="Tong W."/>
            <person name="Li J."/>
            <person name="Tong Z."/>
            <person name="Li S."/>
            <person name="Ye J."/>
            <person name="Wang L."/>
            <person name="Fang L."/>
            <person name="Lei T."/>
            <person name="Chen C.-S."/>
            <person name="Chen H.-C."/>
            <person name="Xu Z."/>
            <person name="Li H."/>
            <person name="Huang H."/>
            <person name="Zhang F."/>
            <person name="Xu H."/>
            <person name="Li N."/>
            <person name="Zhao C."/>
            <person name="Li S."/>
            <person name="Dong L."/>
            <person name="Huang Y."/>
            <person name="Li L."/>
            <person name="Xi Y."/>
            <person name="Qi Q."/>
            <person name="Li W."/>
            <person name="Zhang B."/>
            <person name="Hu W."/>
            <person name="Zhang Y."/>
            <person name="Tian X."/>
            <person name="Jiao Y."/>
            <person name="Liang X."/>
            <person name="Jin J."/>
            <person name="Gao L."/>
            <person name="Zheng W."/>
            <person name="Hao B."/>
            <person name="Liu S.-M."/>
            <person name="Wang W."/>
            <person name="Yuan L."/>
            <person name="Cao M."/>
            <person name="McDermott J."/>
            <person name="Samudrala R."/>
            <person name="Wang J."/>
            <person name="Wong G.K.-S."/>
            <person name="Yang H."/>
        </authorList>
    </citation>
    <scope>NUCLEOTIDE SEQUENCE [LARGE SCALE GENOMIC DNA]</scope>
    <source>
        <strain>cv. Nipponbare</strain>
    </source>
</reference>
<reference key="7">
    <citation type="journal article" date="1997" name="Plant J.">
        <title>Differential expression of a CAK (cdc2-activating kinase)-like protein kinase, cyclins and cdc2 genes from rice during the cell cycle and in response to gibberellin.</title>
        <authorList>
            <person name="Sauter M."/>
        </authorList>
    </citation>
    <scope>TISSUE SPECIFICITY</scope>
    <scope>DEVELOPMENTAL STAGE</scope>
    <scope>INDUCTION</scope>
</reference>
<reference key="8">
    <citation type="journal article" date="2000" name="Planta">
        <title>The cell cycle genes cycA1;1 and cdc2Os-3 are coordinately regulated by gibberellin in planta.</title>
        <authorList>
            <person name="Fabian T."/>
            <person name="Lorbiecke R."/>
            <person name="Umeda M."/>
            <person name="Sauter M."/>
        </authorList>
    </citation>
    <scope>DEVELOPMENTAL STAGE</scope>
    <scope>INDUCTION</scope>
</reference>
<reference key="9">
    <citation type="journal article" date="2003" name="Plant J.">
        <title>Cell cycle function of a rice B2-type cyclin interacting with a B-type cyclin-dependent kinase.</title>
        <authorList>
            <person name="Lee J."/>
            <person name="Das A."/>
            <person name="Yamaguchi M."/>
            <person name="Hashimoto J."/>
            <person name="Tsutsumi N."/>
            <person name="Uchimiya H."/>
            <person name="Umeda M."/>
        </authorList>
    </citation>
    <scope>FUNCTION</scope>
    <scope>DEVELOPMENTAL STAGE</scope>
    <scope>INTERACTION WITH CDKB2-1</scope>
</reference>
<reference key="10">
    <citation type="journal article" date="2006" name="Mol. Genet. Genomics">
        <title>Genome-wide analysis of cyclin family in rice (Oryza sativa L.).</title>
        <authorList>
            <person name="La H."/>
            <person name="Li J."/>
            <person name="Ji Z."/>
            <person name="Cheng Y."/>
            <person name="Li X."/>
            <person name="Jiang S."/>
            <person name="Venkatesh P.N."/>
            <person name="Ramachandran S."/>
        </authorList>
    </citation>
    <scope>GENE FAMILY</scope>
    <scope>NOMENCLATURE</scope>
</reference>
<keyword id="KW-0131">Cell cycle</keyword>
<keyword id="KW-0132">Cell division</keyword>
<keyword id="KW-0195">Cyclin</keyword>
<keyword id="KW-0498">Mitosis</keyword>
<keyword id="KW-1185">Reference proteome</keyword>
<name>CCB21_ORYSJ</name>
<organism>
    <name type="scientific">Oryza sativa subsp. japonica</name>
    <name type="common">Rice</name>
    <dbReference type="NCBI Taxonomy" id="39947"/>
    <lineage>
        <taxon>Eukaryota</taxon>
        <taxon>Viridiplantae</taxon>
        <taxon>Streptophyta</taxon>
        <taxon>Embryophyta</taxon>
        <taxon>Tracheophyta</taxon>
        <taxon>Spermatophyta</taxon>
        <taxon>Magnoliopsida</taxon>
        <taxon>Liliopsida</taxon>
        <taxon>Poales</taxon>
        <taxon>Poaceae</taxon>
        <taxon>BOP clade</taxon>
        <taxon>Oryzoideae</taxon>
        <taxon>Oryzeae</taxon>
        <taxon>Oryzinae</taxon>
        <taxon>Oryza</taxon>
        <taxon>Oryza sativa</taxon>
    </lineage>
</organism>
<sequence>MDRASENRRLAAVGKPVPGIGEMGNRRPLRDINNLVGAPPHPSAIAKKPMLEKSGKEEQKPALVVSHRPMTRNFAASLTRKEQLDHQVSVADAAVVCTDPQKNPIPDGTVDDDVESCESNDYIAVDECNDTDEDESMMDIDSADSGNPLAATEYVEELYKFYRENEEMSCVQPDYMSSQGDINEKMRAILIDWLIEVHHKFELMDETLFLTVNIVDRFLEKQVVPRKKLQLVGVTAMLLACKYEEVAVPVVEDLVLISDRAYTKGQILEMEKLILNTLQFNMSVPTPYVFMRRFLKAAQSDKQLQLLSFFILELSLVEYQMLKYRPSLLAAAAVYTAQCALTRCQQWTKTCELHSRYTGEQLLECSRMMVDFHQKAGAGKLTGVHRKYSTFKFGCAAKTEPALFLLESGAGGYNLQKQPC</sequence>
<gene>
    <name type="primary">CYCB2-1</name>
    <name type="synonym">CYCB2</name>
    <name type="ordered locus">Os04g0563700</name>
    <name type="ordered locus">LOC_Os04g47580</name>
    <name evidence="7" type="ORF">OsJ_15792</name>
    <name type="ORF">OSJNBb0078D11.10</name>
</gene>
<protein>
    <recommendedName>
        <fullName>Cyclin-B2-1</fullName>
    </recommendedName>
    <alternativeName>
        <fullName>CycB2-Os1</fullName>
    </alternativeName>
    <alternativeName>
        <fullName>G2/mitotic-specific cyclin-B2-1</fullName>
        <shortName>CycB2;1</shortName>
    </alternativeName>
</protein>
<dbReference type="EMBL" id="AB024987">
    <property type="protein sequence ID" value="BAA86629.1"/>
    <property type="molecule type" value="mRNA"/>
</dbReference>
<dbReference type="EMBL" id="AL606694">
    <property type="protein sequence ID" value="CAE01925.2"/>
    <property type="molecule type" value="Genomic_DNA"/>
</dbReference>
<dbReference type="EMBL" id="AP008210">
    <property type="protein sequence ID" value="BAF15478.1"/>
    <property type="molecule type" value="Genomic_DNA"/>
</dbReference>
<dbReference type="EMBL" id="AP014960">
    <property type="protein sequence ID" value="BAS90502.1"/>
    <property type="molecule type" value="Genomic_DNA"/>
</dbReference>
<dbReference type="EMBL" id="CM000141">
    <property type="protein sequence ID" value="EEE61503.1"/>
    <property type="molecule type" value="Genomic_DNA"/>
</dbReference>
<dbReference type="RefSeq" id="XP_015634273.1">
    <property type="nucleotide sequence ID" value="XM_015778787.1"/>
</dbReference>
<dbReference type="SMR" id="Q7XSJ6"/>
<dbReference type="FunCoup" id="Q7XSJ6">
    <property type="interactions" value="1459"/>
</dbReference>
<dbReference type="STRING" id="39947.Q7XSJ6"/>
<dbReference type="PaxDb" id="39947-Q7XSJ6"/>
<dbReference type="EnsemblPlants" id="Os04t0563700-01">
    <property type="protein sequence ID" value="Os04t0563700-01"/>
    <property type="gene ID" value="Os04g0563700"/>
</dbReference>
<dbReference type="Gramene" id="Os04t0563700-01">
    <property type="protein sequence ID" value="Os04t0563700-01"/>
    <property type="gene ID" value="Os04g0563700"/>
</dbReference>
<dbReference type="KEGG" id="dosa:Os04g0563700"/>
<dbReference type="eggNOG" id="KOG0653">
    <property type="taxonomic scope" value="Eukaryota"/>
</dbReference>
<dbReference type="HOGENOM" id="CLU_020695_0_0_1"/>
<dbReference type="InParanoid" id="Q7XSJ6"/>
<dbReference type="OMA" id="NLQKQPC"/>
<dbReference type="OrthoDB" id="5590282at2759"/>
<dbReference type="Proteomes" id="UP000000763">
    <property type="component" value="Chromosome 4"/>
</dbReference>
<dbReference type="Proteomes" id="UP000007752">
    <property type="component" value="Chromosome 4"/>
</dbReference>
<dbReference type="Proteomes" id="UP000059680">
    <property type="component" value="Chromosome 4"/>
</dbReference>
<dbReference type="GO" id="GO:0000307">
    <property type="term" value="C:cyclin-dependent protein kinase holoenzyme complex"/>
    <property type="evidence" value="ECO:0000318"/>
    <property type="project" value="GO_Central"/>
</dbReference>
<dbReference type="GO" id="GO:0005737">
    <property type="term" value="C:cytoplasm"/>
    <property type="evidence" value="ECO:0000318"/>
    <property type="project" value="GO_Central"/>
</dbReference>
<dbReference type="GO" id="GO:0005634">
    <property type="term" value="C:nucleus"/>
    <property type="evidence" value="ECO:0000318"/>
    <property type="project" value="GO_Central"/>
</dbReference>
<dbReference type="GO" id="GO:0016538">
    <property type="term" value="F:cyclin-dependent protein serine/threonine kinase regulator activity"/>
    <property type="evidence" value="ECO:0000318"/>
    <property type="project" value="GO_Central"/>
</dbReference>
<dbReference type="GO" id="GO:0051301">
    <property type="term" value="P:cell division"/>
    <property type="evidence" value="ECO:0007669"/>
    <property type="project" value="UniProtKB-KW"/>
</dbReference>
<dbReference type="GO" id="GO:0000082">
    <property type="term" value="P:G1/S transition of mitotic cell cycle"/>
    <property type="evidence" value="ECO:0000318"/>
    <property type="project" value="GO_Central"/>
</dbReference>
<dbReference type="CDD" id="cd20567">
    <property type="entry name" value="CYCLIN_AtCycB-like_rpt1"/>
    <property type="match status" value="1"/>
</dbReference>
<dbReference type="CDD" id="cd20511">
    <property type="entry name" value="CYCLIN_AtCycB-like_rpt2"/>
    <property type="match status" value="1"/>
</dbReference>
<dbReference type="FunFam" id="1.10.472.10:FF:000032">
    <property type="entry name" value="G2/mitotic-specific cyclin-1"/>
    <property type="match status" value="1"/>
</dbReference>
<dbReference type="Gene3D" id="1.10.472.10">
    <property type="entry name" value="Cyclin-like"/>
    <property type="match status" value="2"/>
</dbReference>
<dbReference type="InterPro" id="IPR039361">
    <property type="entry name" value="Cyclin"/>
</dbReference>
<dbReference type="InterPro" id="IPR013763">
    <property type="entry name" value="Cyclin-like_dom"/>
</dbReference>
<dbReference type="InterPro" id="IPR036915">
    <property type="entry name" value="Cyclin-like_sf"/>
</dbReference>
<dbReference type="InterPro" id="IPR046965">
    <property type="entry name" value="Cyclin_A/B-like"/>
</dbReference>
<dbReference type="InterPro" id="IPR004367">
    <property type="entry name" value="Cyclin_C-dom"/>
</dbReference>
<dbReference type="InterPro" id="IPR006671">
    <property type="entry name" value="Cyclin_N"/>
</dbReference>
<dbReference type="InterPro" id="IPR048258">
    <property type="entry name" value="Cyclins_cyclin-box"/>
</dbReference>
<dbReference type="PANTHER" id="PTHR10177">
    <property type="entry name" value="CYCLINS"/>
    <property type="match status" value="1"/>
</dbReference>
<dbReference type="Pfam" id="PF02984">
    <property type="entry name" value="Cyclin_C"/>
    <property type="match status" value="1"/>
</dbReference>
<dbReference type="Pfam" id="PF00134">
    <property type="entry name" value="Cyclin_N"/>
    <property type="match status" value="1"/>
</dbReference>
<dbReference type="PIRSF" id="PIRSF001771">
    <property type="entry name" value="Cyclin_A_B_D_E"/>
    <property type="match status" value="1"/>
</dbReference>
<dbReference type="SMART" id="SM00385">
    <property type="entry name" value="CYCLIN"/>
    <property type="match status" value="2"/>
</dbReference>
<dbReference type="SMART" id="SM01332">
    <property type="entry name" value="Cyclin_C"/>
    <property type="match status" value="1"/>
</dbReference>
<dbReference type="SUPFAM" id="SSF47954">
    <property type="entry name" value="Cyclin-like"/>
    <property type="match status" value="2"/>
</dbReference>
<dbReference type="PROSITE" id="PS00292">
    <property type="entry name" value="CYCLINS"/>
    <property type="match status" value="1"/>
</dbReference>
<comment type="function">
    <text evidence="2 4">Involved in the control of the cell cycle at the G2/M (mitosis) transition. May activate CDKB2-1 kinase.</text>
</comment>
<comment type="subunit">
    <text evidence="4">Interacts with CDKB2-1.</text>
</comment>
<comment type="tissue specificity">
    <text evidence="2 5">Expressed in the root apices.</text>
</comment>
<comment type="developmental stage">
    <text evidence="2 3 4 5">Expressed in the G2/M phases and disappears at the anaphase of mitosis.</text>
</comment>
<comment type="induction">
    <text evidence="3 5">By gibberellic acid (GA3).</text>
</comment>
<comment type="similarity">
    <text evidence="6">Belongs to the cyclin family. Cyclin AB subfamily.</text>
</comment>
<proteinExistence type="evidence at protein level"/>